<accession>P85339</accession>
<reference evidence="6" key="1">
    <citation type="journal article" date="2009" name="J. Plant Physiol.">
        <title>Analysis of the soluble cell wall proteome of gymnosperms.</title>
        <authorList>
            <person name="Uzal E.N."/>
            <person name="Gomez-Ros L.V."/>
            <person name="Hernandez J.A."/>
            <person name="Pedreno M.A."/>
            <person name="Cuello J."/>
            <person name="Ros Barcelo A."/>
        </authorList>
    </citation>
    <scope>PROTEIN SEQUENCE</scope>
    <scope>SUBCELLULAR LOCATION</scope>
    <source>
        <strain evidence="4">PC-1008</strain>
        <tissue evidence="4">Callus</tissue>
    </source>
</reference>
<evidence type="ECO:0000250" key="1">
    <source>
        <dbReference type="UniProtKB" id="O80327"/>
    </source>
</evidence>
<evidence type="ECO:0000250" key="2">
    <source>
        <dbReference type="UniProtKB" id="P33679"/>
    </source>
</evidence>
<evidence type="ECO:0000255" key="3"/>
<evidence type="ECO:0000269" key="4">
    <source>
    </source>
</evidence>
<evidence type="ECO:0000303" key="5">
    <source>
    </source>
</evidence>
<evidence type="ECO:0000305" key="6"/>
<feature type="chain" id="PRO_0000314647" description="Thaumatin-like protein 1">
    <location>
        <begin position="1" status="less than"/>
        <end position="16" status="greater than"/>
    </location>
</feature>
<feature type="disulfide bond" evidence="2">
    <location>
        <begin status="unknown"/>
        <end position="9"/>
    </location>
</feature>
<feature type="non-terminal residue" evidence="5">
    <location>
        <position position="1"/>
    </location>
</feature>
<feature type="non-terminal residue" evidence="5">
    <location>
        <position position="16"/>
    </location>
</feature>
<keyword id="KW-0134">Cell wall</keyword>
<keyword id="KW-0903">Direct protein sequencing</keyword>
<keyword id="KW-1015">Disulfide bond</keyword>
<keyword id="KW-0964">Secreted</keyword>
<comment type="subcellular location">
    <subcellularLocation>
        <location evidence="1">Secreted</location>
    </subcellularLocation>
    <subcellularLocation>
        <location evidence="1 4">Secreted</location>
        <location evidence="1 4">Cell wall</location>
    </subcellularLocation>
</comment>
<comment type="similarity">
    <text evidence="3">Belongs to the thaumatin family.</text>
</comment>
<name>TLP1_TAXBA</name>
<sequence>DDPTSTFTCPGGSDYK</sequence>
<dbReference type="GO" id="GO:0005576">
    <property type="term" value="C:extracellular region"/>
    <property type="evidence" value="ECO:0007669"/>
    <property type="project" value="UniProtKB-SubCell"/>
</dbReference>
<organism>
    <name type="scientific">Taxus baccata</name>
    <name type="common">English yew</name>
    <dbReference type="NCBI Taxonomy" id="25629"/>
    <lineage>
        <taxon>Eukaryota</taxon>
        <taxon>Viridiplantae</taxon>
        <taxon>Streptophyta</taxon>
        <taxon>Embryophyta</taxon>
        <taxon>Tracheophyta</taxon>
        <taxon>Spermatophyta</taxon>
        <taxon>Pinopsida</taxon>
        <taxon>Pinidae</taxon>
        <taxon>Conifers II</taxon>
        <taxon>Cupressales</taxon>
        <taxon>Taxaceae</taxon>
        <taxon>Taxus</taxon>
    </lineage>
</organism>
<proteinExistence type="evidence at protein level"/>
<protein>
    <recommendedName>
        <fullName>Thaumatin-like protein 1</fullName>
    </recommendedName>
</protein>